<protein>
    <recommendedName>
        <fullName evidence="1">Cytochrome b559 subunit alpha</fullName>
    </recommendedName>
    <alternativeName>
        <fullName evidence="1">PSII reaction center subunit V</fullName>
    </alternativeName>
</protein>
<evidence type="ECO:0000255" key="1">
    <source>
        <dbReference type="HAMAP-Rule" id="MF_00642"/>
    </source>
</evidence>
<comment type="function">
    <text evidence="1">This b-type cytochrome is tightly associated with the reaction center of photosystem II (PSII). PSII is a light-driven water:plastoquinone oxidoreductase that uses light energy to abstract electrons from H(2)O, generating O(2) and a proton gradient subsequently used for ATP formation. It consists of a core antenna complex that captures photons, and an electron transfer chain that converts photonic excitation into a charge separation.</text>
</comment>
<comment type="cofactor">
    <cofactor evidence="1">
        <name>heme b</name>
        <dbReference type="ChEBI" id="CHEBI:60344"/>
    </cofactor>
    <text evidence="1">With its partner (PsbF) binds heme. PSII binds additional chlorophylls, carotenoids and specific lipids.</text>
</comment>
<comment type="subunit">
    <text evidence="1">Heterodimer of an alpha subunit and a beta subunit. PSII is composed of 1 copy each of membrane proteins PsbA, PsbB, PsbC, PsbD, PsbE, PsbF, PsbH, PsbI, PsbJ, PsbK, PsbL, PsbM, PsbT, PsbX, PsbY, PsbZ, Psb30/Ycf12, at least 3 peripheral proteins of the oxygen-evolving complex and a large number of cofactors. It forms dimeric complexes.</text>
</comment>
<comment type="subcellular location">
    <subcellularLocation>
        <location evidence="1">Plastid</location>
        <location evidence="1">Chloroplast thylakoid membrane</location>
        <topology evidence="1">Single-pass membrane protein</topology>
    </subcellularLocation>
</comment>
<comment type="similarity">
    <text evidence="1">Belongs to the PsbE/PsbF family.</text>
</comment>
<accession>Q06GP3</accession>
<organism>
    <name type="scientific">Piper cenocladum</name>
    <name type="common">Ant piper</name>
    <dbReference type="NCBI Taxonomy" id="398741"/>
    <lineage>
        <taxon>Eukaryota</taxon>
        <taxon>Viridiplantae</taxon>
        <taxon>Streptophyta</taxon>
        <taxon>Embryophyta</taxon>
        <taxon>Tracheophyta</taxon>
        <taxon>Spermatophyta</taxon>
        <taxon>Magnoliopsida</taxon>
        <taxon>Magnoliidae</taxon>
        <taxon>Piperales</taxon>
        <taxon>Piperaceae</taxon>
        <taxon>Piper</taxon>
    </lineage>
</organism>
<sequence length="83" mass="9397">MSGSTGERSFADIITSIRYWVIHSITIPSLFIAGWLFVSTGLAYDVFGSPRPNEYFTESRQGIPLITGRFDPLEQLDEFSRSF</sequence>
<reference key="1">
    <citation type="journal article" date="2006" name="BMC Evol. Biol.">
        <title>Complete plastid genome sequences of Drimys, Liriodendron, and Piper: implications for the phylogenetic relationships of magnoliids.</title>
        <authorList>
            <person name="Cai Z."/>
            <person name="Penaflor C."/>
            <person name="Kuehl J.V."/>
            <person name="Leebens-Mack J."/>
            <person name="Carlson J.E."/>
            <person name="dePamphilis C.W."/>
            <person name="Boore J.L."/>
            <person name="Jansen R.K."/>
        </authorList>
    </citation>
    <scope>NUCLEOTIDE SEQUENCE [LARGE SCALE GENOMIC DNA]</scope>
</reference>
<feature type="chain" id="PRO_0000275715" description="Cytochrome b559 subunit alpha">
    <location>
        <begin position="1"/>
        <end position="83"/>
    </location>
</feature>
<feature type="transmembrane region" description="Helical" evidence="1">
    <location>
        <begin position="21"/>
        <end position="35"/>
    </location>
</feature>
<feature type="binding site" description="axial binding residue" evidence="1">
    <location>
        <position position="23"/>
    </location>
    <ligand>
        <name>heme</name>
        <dbReference type="ChEBI" id="CHEBI:30413"/>
        <note>ligand shared with beta subunit</note>
    </ligand>
    <ligandPart>
        <name>Fe</name>
        <dbReference type="ChEBI" id="CHEBI:18248"/>
    </ligandPart>
</feature>
<dbReference type="EMBL" id="DQ887677">
    <property type="protein sequence ID" value="ABI14489.1"/>
    <property type="molecule type" value="Genomic_DNA"/>
</dbReference>
<dbReference type="RefSeq" id="YP_784490.1">
    <property type="nucleotide sequence ID" value="NC_008457.1"/>
</dbReference>
<dbReference type="SMR" id="Q06GP3"/>
<dbReference type="GeneID" id="4363673"/>
<dbReference type="GO" id="GO:0009535">
    <property type="term" value="C:chloroplast thylakoid membrane"/>
    <property type="evidence" value="ECO:0007669"/>
    <property type="project" value="UniProtKB-SubCell"/>
</dbReference>
<dbReference type="GO" id="GO:0009539">
    <property type="term" value="C:photosystem II reaction center"/>
    <property type="evidence" value="ECO:0007669"/>
    <property type="project" value="InterPro"/>
</dbReference>
<dbReference type="GO" id="GO:0009055">
    <property type="term" value="F:electron transfer activity"/>
    <property type="evidence" value="ECO:0007669"/>
    <property type="project" value="UniProtKB-UniRule"/>
</dbReference>
<dbReference type="GO" id="GO:0020037">
    <property type="term" value="F:heme binding"/>
    <property type="evidence" value="ECO:0007669"/>
    <property type="project" value="InterPro"/>
</dbReference>
<dbReference type="GO" id="GO:0005506">
    <property type="term" value="F:iron ion binding"/>
    <property type="evidence" value="ECO:0007669"/>
    <property type="project" value="UniProtKB-UniRule"/>
</dbReference>
<dbReference type="GO" id="GO:0009767">
    <property type="term" value="P:photosynthetic electron transport chain"/>
    <property type="evidence" value="ECO:0007669"/>
    <property type="project" value="InterPro"/>
</dbReference>
<dbReference type="Gene3D" id="1.20.5.860">
    <property type="entry name" value="Photosystem II cytochrome b559, alpha subunit"/>
    <property type="match status" value="1"/>
</dbReference>
<dbReference type="HAMAP" id="MF_00642">
    <property type="entry name" value="PSII_PsbE"/>
    <property type="match status" value="1"/>
</dbReference>
<dbReference type="InterPro" id="IPR006217">
    <property type="entry name" value="PSII_cyt_b559_asu"/>
</dbReference>
<dbReference type="InterPro" id="IPR037025">
    <property type="entry name" value="PSII_cyt_b559_asu_sf"/>
</dbReference>
<dbReference type="InterPro" id="IPR006216">
    <property type="entry name" value="PSII_cyt_b559_CS"/>
</dbReference>
<dbReference type="InterPro" id="IPR013081">
    <property type="entry name" value="PSII_cyt_b559_N"/>
</dbReference>
<dbReference type="InterPro" id="IPR013082">
    <property type="entry name" value="PSII_cytb559_asu_lum"/>
</dbReference>
<dbReference type="NCBIfam" id="TIGR01332">
    <property type="entry name" value="cyt_b559_alpha"/>
    <property type="match status" value="1"/>
</dbReference>
<dbReference type="PANTHER" id="PTHR33391">
    <property type="entry name" value="CYTOCHROME B559 SUBUNIT BETA-RELATED"/>
    <property type="match status" value="1"/>
</dbReference>
<dbReference type="PANTHER" id="PTHR33391:SF9">
    <property type="entry name" value="CYTOCHROME B559 SUBUNIT BETA-RELATED"/>
    <property type="match status" value="1"/>
</dbReference>
<dbReference type="Pfam" id="PF00283">
    <property type="entry name" value="Cytochrom_B559"/>
    <property type="match status" value="1"/>
</dbReference>
<dbReference type="Pfam" id="PF00284">
    <property type="entry name" value="Cytochrom_B559a"/>
    <property type="match status" value="1"/>
</dbReference>
<dbReference type="PIRSF" id="PIRSF000036">
    <property type="entry name" value="PsbE"/>
    <property type="match status" value="1"/>
</dbReference>
<dbReference type="SUPFAM" id="SSF161045">
    <property type="entry name" value="Cytochrome b559 subunits"/>
    <property type="match status" value="1"/>
</dbReference>
<dbReference type="PROSITE" id="PS00537">
    <property type="entry name" value="CYTOCHROME_B559"/>
    <property type="match status" value="1"/>
</dbReference>
<proteinExistence type="inferred from homology"/>
<keyword id="KW-0150">Chloroplast</keyword>
<keyword id="KW-0249">Electron transport</keyword>
<keyword id="KW-0349">Heme</keyword>
<keyword id="KW-0408">Iron</keyword>
<keyword id="KW-0472">Membrane</keyword>
<keyword id="KW-0479">Metal-binding</keyword>
<keyword id="KW-0602">Photosynthesis</keyword>
<keyword id="KW-0604">Photosystem II</keyword>
<keyword id="KW-0934">Plastid</keyword>
<keyword id="KW-0793">Thylakoid</keyword>
<keyword id="KW-0812">Transmembrane</keyword>
<keyword id="KW-1133">Transmembrane helix</keyword>
<keyword id="KW-0813">Transport</keyword>
<geneLocation type="chloroplast"/>
<name>PSBE_PIPCE</name>
<gene>
    <name evidence="1" type="primary">psbE</name>
</gene>